<reference key="1">
    <citation type="submission" date="2005-09" db="EMBL/GenBank/DDBJ databases">
        <authorList>
            <person name="Glass J.I."/>
            <person name="Lartigue C."/>
            <person name="Pfannkoch C."/>
            <person name="Baden-Tillson H."/>
            <person name="Smith H.O."/>
            <person name="Venter J.C."/>
            <person name="Roske K."/>
            <person name="Wise K.S."/>
            <person name="Calcutt M.J."/>
            <person name="Nelson W.C."/>
            <person name="Nierman W.C."/>
        </authorList>
    </citation>
    <scope>NUCLEOTIDE SEQUENCE [LARGE SCALE GENOMIC DNA]</scope>
    <source>
        <strain>California kid / ATCC 27343 / NCTC 10154</strain>
    </source>
</reference>
<sequence>MSSKATKTVKSKFDIINNQLRDDLIDFRSGDTIRVDVKIKEGDKFRIQSFEGLVIKTQGSGITYSVVVRKMSNGVFVERTFPLHSPIIDSVTLIKRGKVRRSRIYYIRKLSGKAARIKEIMPTKQAKEIK</sequence>
<gene>
    <name evidence="1" type="primary">rplS</name>
    <name type="ordered locus">MCAP_0544</name>
</gene>
<protein>
    <recommendedName>
        <fullName evidence="1">Large ribosomal subunit protein bL19</fullName>
    </recommendedName>
    <alternativeName>
        <fullName evidence="2">50S ribosomal protein L19</fullName>
    </alternativeName>
</protein>
<organism>
    <name type="scientific">Mycoplasma capricolum subsp. capricolum (strain California kid / ATCC 27343 / NCTC 10154)</name>
    <dbReference type="NCBI Taxonomy" id="340047"/>
    <lineage>
        <taxon>Bacteria</taxon>
        <taxon>Bacillati</taxon>
        <taxon>Mycoplasmatota</taxon>
        <taxon>Mollicutes</taxon>
        <taxon>Mycoplasmataceae</taxon>
        <taxon>Mycoplasma</taxon>
    </lineage>
</organism>
<feature type="chain" id="PRO_0000252521" description="Large ribosomal subunit protein bL19">
    <location>
        <begin position="1"/>
        <end position="130"/>
    </location>
</feature>
<proteinExistence type="inferred from homology"/>
<accession>Q2SRU8</accession>
<evidence type="ECO:0000255" key="1">
    <source>
        <dbReference type="HAMAP-Rule" id="MF_00402"/>
    </source>
</evidence>
<evidence type="ECO:0000305" key="2"/>
<name>RL19_MYCCT</name>
<dbReference type="EMBL" id="CP000123">
    <property type="protein sequence ID" value="ABC01862.1"/>
    <property type="molecule type" value="Genomic_DNA"/>
</dbReference>
<dbReference type="RefSeq" id="WP_011387413.1">
    <property type="nucleotide sequence ID" value="NC_007633.1"/>
</dbReference>
<dbReference type="SMR" id="Q2SRU8"/>
<dbReference type="GeneID" id="23778499"/>
<dbReference type="KEGG" id="mcp:MCAP_0544"/>
<dbReference type="HOGENOM" id="CLU_103507_2_1_14"/>
<dbReference type="PhylomeDB" id="Q2SRU8"/>
<dbReference type="Proteomes" id="UP000001928">
    <property type="component" value="Chromosome"/>
</dbReference>
<dbReference type="GO" id="GO:0022625">
    <property type="term" value="C:cytosolic large ribosomal subunit"/>
    <property type="evidence" value="ECO:0007669"/>
    <property type="project" value="TreeGrafter"/>
</dbReference>
<dbReference type="GO" id="GO:0003735">
    <property type="term" value="F:structural constituent of ribosome"/>
    <property type="evidence" value="ECO:0007669"/>
    <property type="project" value="InterPro"/>
</dbReference>
<dbReference type="GO" id="GO:0006412">
    <property type="term" value="P:translation"/>
    <property type="evidence" value="ECO:0007669"/>
    <property type="project" value="UniProtKB-UniRule"/>
</dbReference>
<dbReference type="Gene3D" id="2.30.30.790">
    <property type="match status" value="1"/>
</dbReference>
<dbReference type="HAMAP" id="MF_00402">
    <property type="entry name" value="Ribosomal_bL19"/>
    <property type="match status" value="1"/>
</dbReference>
<dbReference type="InterPro" id="IPR001857">
    <property type="entry name" value="Ribosomal_bL19"/>
</dbReference>
<dbReference type="InterPro" id="IPR018257">
    <property type="entry name" value="Ribosomal_bL19_CS"/>
</dbReference>
<dbReference type="InterPro" id="IPR038657">
    <property type="entry name" value="Ribosomal_bL19_sf"/>
</dbReference>
<dbReference type="InterPro" id="IPR008991">
    <property type="entry name" value="Translation_prot_SH3-like_sf"/>
</dbReference>
<dbReference type="NCBIfam" id="TIGR01024">
    <property type="entry name" value="rplS_bact"/>
    <property type="match status" value="1"/>
</dbReference>
<dbReference type="PANTHER" id="PTHR15680:SF9">
    <property type="entry name" value="LARGE RIBOSOMAL SUBUNIT PROTEIN BL19M"/>
    <property type="match status" value="1"/>
</dbReference>
<dbReference type="PANTHER" id="PTHR15680">
    <property type="entry name" value="RIBOSOMAL PROTEIN L19"/>
    <property type="match status" value="1"/>
</dbReference>
<dbReference type="Pfam" id="PF01245">
    <property type="entry name" value="Ribosomal_L19"/>
    <property type="match status" value="1"/>
</dbReference>
<dbReference type="PIRSF" id="PIRSF002191">
    <property type="entry name" value="Ribosomal_L19"/>
    <property type="match status" value="1"/>
</dbReference>
<dbReference type="PRINTS" id="PR00061">
    <property type="entry name" value="RIBOSOMALL19"/>
</dbReference>
<dbReference type="SUPFAM" id="SSF50104">
    <property type="entry name" value="Translation proteins SH3-like domain"/>
    <property type="match status" value="1"/>
</dbReference>
<dbReference type="PROSITE" id="PS01015">
    <property type="entry name" value="RIBOSOMAL_L19"/>
    <property type="match status" value="1"/>
</dbReference>
<comment type="function">
    <text evidence="1">This protein is located at the 30S-50S ribosomal subunit interface and may play a role in the structure and function of the aminoacyl-tRNA binding site.</text>
</comment>
<comment type="similarity">
    <text evidence="1">Belongs to the bacterial ribosomal protein bL19 family.</text>
</comment>
<keyword id="KW-0687">Ribonucleoprotein</keyword>
<keyword id="KW-0689">Ribosomal protein</keyword>